<protein>
    <recommendedName>
        <fullName evidence="1">Shikimate kinase 2</fullName>
        <shortName evidence="1">SK 2</shortName>
        <ecNumber evidence="1">2.7.1.71</ecNumber>
    </recommendedName>
</protein>
<proteinExistence type="inferred from homology"/>
<evidence type="ECO:0000255" key="1">
    <source>
        <dbReference type="HAMAP-Rule" id="MF_01269"/>
    </source>
</evidence>
<gene>
    <name evidence="1" type="primary">aroL</name>
    <name type="ordered locus">Ecok1_03560</name>
    <name type="ORF">APECO1_1620</name>
</gene>
<sequence length="174" mass="19136">MTQPLFLIGPRGCGKTTVGMALADSLNRRFVDTDLWLQSQLNMTVAEIVEREEWAGFRARETAALEAVTAPSTVIATGGGIILTEFNRHFMQNNGIVVYLCAPVSVLVNRLQAAPEEDLRPTLTGKPLSEEVQEVLEERDALYREVAHIIIDATNEPSQVISEIRSALAQTINC</sequence>
<reference key="1">
    <citation type="journal article" date="2007" name="J. Bacteriol.">
        <title>The genome sequence of avian pathogenic Escherichia coli strain O1:K1:H7 shares strong similarities with human extraintestinal pathogenic E. coli genomes.</title>
        <authorList>
            <person name="Johnson T.J."/>
            <person name="Kariyawasam S."/>
            <person name="Wannemuehler Y."/>
            <person name="Mangiamele P."/>
            <person name="Johnson S.J."/>
            <person name="Doetkott C."/>
            <person name="Skyberg J.A."/>
            <person name="Lynne A.M."/>
            <person name="Johnson J.R."/>
            <person name="Nolan L.K."/>
        </authorList>
    </citation>
    <scope>NUCLEOTIDE SEQUENCE [LARGE SCALE GENOMIC DNA]</scope>
</reference>
<name>AROL_ECOK1</name>
<keyword id="KW-0028">Amino-acid biosynthesis</keyword>
<keyword id="KW-0057">Aromatic amino acid biosynthesis</keyword>
<keyword id="KW-0067">ATP-binding</keyword>
<keyword id="KW-0963">Cytoplasm</keyword>
<keyword id="KW-0418">Kinase</keyword>
<keyword id="KW-0460">Magnesium</keyword>
<keyword id="KW-0479">Metal-binding</keyword>
<keyword id="KW-0547">Nucleotide-binding</keyword>
<keyword id="KW-1185">Reference proteome</keyword>
<keyword id="KW-0808">Transferase</keyword>
<accession>A1A860</accession>
<feature type="chain" id="PRO_1000067329" description="Shikimate kinase 2">
    <location>
        <begin position="1"/>
        <end position="174"/>
    </location>
</feature>
<feature type="region of interest" description="LID domain">
    <location>
        <begin position="112"/>
        <end position="126"/>
    </location>
</feature>
<feature type="binding site" evidence="1">
    <location>
        <begin position="12"/>
        <end position="17"/>
    </location>
    <ligand>
        <name>ATP</name>
        <dbReference type="ChEBI" id="CHEBI:30616"/>
    </ligand>
</feature>
<feature type="binding site" evidence="1">
    <location>
        <position position="16"/>
    </location>
    <ligand>
        <name>Mg(2+)</name>
        <dbReference type="ChEBI" id="CHEBI:18420"/>
    </ligand>
</feature>
<feature type="binding site" evidence="1">
    <location>
        <position position="32"/>
    </location>
    <ligand>
        <name>Mg(2+)</name>
        <dbReference type="ChEBI" id="CHEBI:18420"/>
    </ligand>
</feature>
<feature type="binding site" evidence="1">
    <location>
        <position position="34"/>
    </location>
    <ligand>
        <name>substrate</name>
    </ligand>
</feature>
<feature type="binding site" evidence="1">
    <location>
        <position position="58"/>
    </location>
    <ligand>
        <name>substrate</name>
    </ligand>
</feature>
<feature type="binding site" evidence="1">
    <location>
        <position position="79"/>
    </location>
    <ligand>
        <name>substrate</name>
    </ligand>
</feature>
<feature type="binding site" evidence="1">
    <location>
        <position position="120"/>
    </location>
    <ligand>
        <name>ATP</name>
        <dbReference type="ChEBI" id="CHEBI:30616"/>
    </ligand>
</feature>
<feature type="binding site" evidence="1">
    <location>
        <position position="139"/>
    </location>
    <ligand>
        <name>substrate</name>
    </ligand>
</feature>
<dbReference type="EC" id="2.7.1.71" evidence="1"/>
<dbReference type="EMBL" id="CP000468">
    <property type="protein sequence ID" value="ABI99849.1"/>
    <property type="molecule type" value="Genomic_DNA"/>
</dbReference>
<dbReference type="RefSeq" id="WP_000193383.1">
    <property type="nucleotide sequence ID" value="NZ_CADILS010000009.1"/>
</dbReference>
<dbReference type="SMR" id="A1A860"/>
<dbReference type="KEGG" id="ecv:APECO1_1620"/>
<dbReference type="HOGENOM" id="CLU_057607_4_3_6"/>
<dbReference type="UniPathway" id="UPA00053">
    <property type="reaction ID" value="UER00088"/>
</dbReference>
<dbReference type="Proteomes" id="UP000008216">
    <property type="component" value="Chromosome"/>
</dbReference>
<dbReference type="GO" id="GO:0005829">
    <property type="term" value="C:cytosol"/>
    <property type="evidence" value="ECO:0007669"/>
    <property type="project" value="TreeGrafter"/>
</dbReference>
<dbReference type="GO" id="GO:0005524">
    <property type="term" value="F:ATP binding"/>
    <property type="evidence" value="ECO:0007669"/>
    <property type="project" value="UniProtKB-UniRule"/>
</dbReference>
<dbReference type="GO" id="GO:0000287">
    <property type="term" value="F:magnesium ion binding"/>
    <property type="evidence" value="ECO:0007669"/>
    <property type="project" value="UniProtKB-UniRule"/>
</dbReference>
<dbReference type="GO" id="GO:0004765">
    <property type="term" value="F:shikimate kinase activity"/>
    <property type="evidence" value="ECO:0007669"/>
    <property type="project" value="UniProtKB-UniRule"/>
</dbReference>
<dbReference type="GO" id="GO:0008652">
    <property type="term" value="P:amino acid biosynthetic process"/>
    <property type="evidence" value="ECO:0007669"/>
    <property type="project" value="UniProtKB-KW"/>
</dbReference>
<dbReference type="GO" id="GO:0009073">
    <property type="term" value="P:aromatic amino acid family biosynthetic process"/>
    <property type="evidence" value="ECO:0007669"/>
    <property type="project" value="UniProtKB-KW"/>
</dbReference>
<dbReference type="GO" id="GO:0009423">
    <property type="term" value="P:chorismate biosynthetic process"/>
    <property type="evidence" value="ECO:0007669"/>
    <property type="project" value="UniProtKB-UniRule"/>
</dbReference>
<dbReference type="CDD" id="cd00464">
    <property type="entry name" value="SK"/>
    <property type="match status" value="1"/>
</dbReference>
<dbReference type="FunFam" id="3.40.50.300:FF:000408">
    <property type="entry name" value="Shikimate kinase 2"/>
    <property type="match status" value="1"/>
</dbReference>
<dbReference type="Gene3D" id="3.40.50.300">
    <property type="entry name" value="P-loop containing nucleotide triphosphate hydrolases"/>
    <property type="match status" value="1"/>
</dbReference>
<dbReference type="HAMAP" id="MF_00109">
    <property type="entry name" value="Shikimate_kinase"/>
    <property type="match status" value="1"/>
</dbReference>
<dbReference type="HAMAP" id="MF_01269">
    <property type="entry name" value="Shikimate_kinase_2"/>
    <property type="match status" value="1"/>
</dbReference>
<dbReference type="InterPro" id="IPR027417">
    <property type="entry name" value="P-loop_NTPase"/>
</dbReference>
<dbReference type="InterPro" id="IPR031322">
    <property type="entry name" value="Shikimate/glucono_kinase"/>
</dbReference>
<dbReference type="InterPro" id="IPR000623">
    <property type="entry name" value="Shikimate_kinase/TSH1"/>
</dbReference>
<dbReference type="InterPro" id="IPR027544">
    <property type="entry name" value="Shikimate_kinase_2"/>
</dbReference>
<dbReference type="InterPro" id="IPR023000">
    <property type="entry name" value="Shikimate_kinase_CS"/>
</dbReference>
<dbReference type="NCBIfam" id="NF002988">
    <property type="entry name" value="PRK03731.1"/>
    <property type="match status" value="1"/>
</dbReference>
<dbReference type="PANTHER" id="PTHR21087">
    <property type="entry name" value="SHIKIMATE KINASE"/>
    <property type="match status" value="1"/>
</dbReference>
<dbReference type="PANTHER" id="PTHR21087:SF21">
    <property type="entry name" value="SHIKIMATE KINASE 2"/>
    <property type="match status" value="1"/>
</dbReference>
<dbReference type="Pfam" id="PF01202">
    <property type="entry name" value="SKI"/>
    <property type="match status" value="1"/>
</dbReference>
<dbReference type="PRINTS" id="PR01100">
    <property type="entry name" value="SHIKIMTKNASE"/>
</dbReference>
<dbReference type="SUPFAM" id="SSF52540">
    <property type="entry name" value="P-loop containing nucleoside triphosphate hydrolases"/>
    <property type="match status" value="1"/>
</dbReference>
<dbReference type="PROSITE" id="PS01128">
    <property type="entry name" value="SHIKIMATE_KINASE"/>
    <property type="match status" value="1"/>
</dbReference>
<comment type="function">
    <text evidence="1">Catalyzes the specific phosphorylation of the 3-hydroxyl group of shikimic acid using ATP as a cosubstrate.</text>
</comment>
<comment type="catalytic activity">
    <reaction evidence="1">
        <text>shikimate + ATP = 3-phosphoshikimate + ADP + H(+)</text>
        <dbReference type="Rhea" id="RHEA:13121"/>
        <dbReference type="ChEBI" id="CHEBI:15378"/>
        <dbReference type="ChEBI" id="CHEBI:30616"/>
        <dbReference type="ChEBI" id="CHEBI:36208"/>
        <dbReference type="ChEBI" id="CHEBI:145989"/>
        <dbReference type="ChEBI" id="CHEBI:456216"/>
        <dbReference type="EC" id="2.7.1.71"/>
    </reaction>
</comment>
<comment type="cofactor">
    <cofactor evidence="1">
        <name>Mg(2+)</name>
        <dbReference type="ChEBI" id="CHEBI:18420"/>
    </cofactor>
    <text evidence="1">Binds 1 Mg(2+) ion per subunit.</text>
</comment>
<comment type="pathway">
    <text evidence="1">Metabolic intermediate biosynthesis; chorismate biosynthesis; chorismate from D-erythrose 4-phosphate and phosphoenolpyruvate: step 5/7.</text>
</comment>
<comment type="subunit">
    <text evidence="1">Monomer.</text>
</comment>
<comment type="subcellular location">
    <subcellularLocation>
        <location evidence="1">Cytoplasm</location>
    </subcellularLocation>
</comment>
<comment type="domain">
    <text evidence="1">The LID domain closes over the active site upon ATP binding.</text>
</comment>
<comment type="similarity">
    <text evidence="1">Belongs to the shikimate kinase family. AroL subfamily.</text>
</comment>
<organism>
    <name type="scientific">Escherichia coli O1:K1 / APEC</name>
    <dbReference type="NCBI Taxonomy" id="405955"/>
    <lineage>
        <taxon>Bacteria</taxon>
        <taxon>Pseudomonadati</taxon>
        <taxon>Pseudomonadota</taxon>
        <taxon>Gammaproteobacteria</taxon>
        <taxon>Enterobacterales</taxon>
        <taxon>Enterobacteriaceae</taxon>
        <taxon>Escherichia</taxon>
    </lineage>
</organism>